<protein>
    <recommendedName>
        <fullName evidence="1">Holliday junction branch migration complex subunit RuvA</fullName>
    </recommendedName>
</protein>
<name>RUVA_MYCMM</name>
<proteinExistence type="inferred from homology"/>
<comment type="function">
    <text evidence="1">The RuvA-RuvB-RuvC complex processes Holliday junction (HJ) DNA during genetic recombination and DNA repair, while the RuvA-RuvB complex plays an important role in the rescue of blocked DNA replication forks via replication fork reversal (RFR). RuvA specifically binds to HJ cruciform DNA, conferring on it an open structure. The RuvB hexamer acts as an ATP-dependent pump, pulling dsDNA into and through the RuvAB complex. HJ branch migration allows RuvC to scan DNA until it finds its consensus sequence, where it cleaves and resolves the cruciform DNA.</text>
</comment>
<comment type="subunit">
    <text evidence="1">Homotetramer. Forms an RuvA(8)-RuvB(12)-Holliday junction (HJ) complex. HJ DNA is sandwiched between 2 RuvA tetramers; dsDNA enters through RuvA and exits via RuvB. An RuvB hexamer assembles on each DNA strand where it exits the tetramer. Each RuvB hexamer is contacted by two RuvA subunits (via domain III) on 2 adjacent RuvB subunits; this complex drives branch migration. In the full resolvosome a probable DNA-RuvA(4)-RuvB(12)-RuvC(2) complex forms which resolves the HJ.</text>
</comment>
<comment type="subcellular location">
    <subcellularLocation>
        <location evidence="1">Cytoplasm</location>
    </subcellularLocation>
</comment>
<comment type="domain">
    <text evidence="1">Has three domains with a flexible linker between the domains II and III and assumes an 'L' shape. Domain III is highly mobile and contacts RuvB.</text>
</comment>
<comment type="similarity">
    <text evidence="1">Belongs to the RuvA family.</text>
</comment>
<gene>
    <name evidence="1" type="primary">ruvA</name>
    <name type="ordered locus">MMAR_2110</name>
</gene>
<feature type="chain" id="PRO_1000090342" description="Holliday junction branch migration complex subunit RuvA">
    <location>
        <begin position="1"/>
        <end position="197"/>
    </location>
</feature>
<feature type="region of interest" description="Domain I" evidence="1">
    <location>
        <begin position="1"/>
        <end position="63"/>
    </location>
</feature>
<feature type="region of interest" description="Domain II" evidence="1">
    <location>
        <begin position="64"/>
        <end position="139"/>
    </location>
</feature>
<feature type="region of interest" description="Flexible linker" evidence="1">
    <location>
        <begin position="139"/>
        <end position="143"/>
    </location>
</feature>
<feature type="region of interest" description="Domain III" evidence="1">
    <location>
        <begin position="144"/>
        <end position="197"/>
    </location>
</feature>
<keyword id="KW-0963">Cytoplasm</keyword>
<keyword id="KW-0227">DNA damage</keyword>
<keyword id="KW-0233">DNA recombination</keyword>
<keyword id="KW-0234">DNA repair</keyword>
<keyword id="KW-0238">DNA-binding</keyword>
<keyword id="KW-1185">Reference proteome</keyword>
<organism>
    <name type="scientific">Mycobacterium marinum (strain ATCC BAA-535 / M)</name>
    <dbReference type="NCBI Taxonomy" id="216594"/>
    <lineage>
        <taxon>Bacteria</taxon>
        <taxon>Bacillati</taxon>
        <taxon>Actinomycetota</taxon>
        <taxon>Actinomycetes</taxon>
        <taxon>Mycobacteriales</taxon>
        <taxon>Mycobacteriaceae</taxon>
        <taxon>Mycobacterium</taxon>
        <taxon>Mycobacterium ulcerans group</taxon>
    </lineage>
</organism>
<sequence length="197" mass="20272">MISSLRGEVLEVALDHVVIEAAGVGYRVNATPSTLATLRQGTDARLITAMIVREDSMTLYGFVDGETRDLFLTLLSVSGVGPRLAMATLSVHDANGLRQALADGDVTALTRVPGIGKRGAERMVVELRDKVGPAGSAATAPAVNGHTVRAPVVEALVGLGFAAKQAEEATDKVLAGDGEATTSSALRAALSLLGKAR</sequence>
<dbReference type="EMBL" id="CP000854">
    <property type="protein sequence ID" value="ACC40560.1"/>
    <property type="molecule type" value="Genomic_DNA"/>
</dbReference>
<dbReference type="RefSeq" id="WP_011739821.1">
    <property type="nucleotide sequence ID" value="NC_010612.1"/>
</dbReference>
<dbReference type="SMR" id="B2HN62"/>
<dbReference type="STRING" id="216594.MMAR_2110"/>
<dbReference type="GeneID" id="93437646"/>
<dbReference type="KEGG" id="mmi:MMAR_2110"/>
<dbReference type="eggNOG" id="COG0632">
    <property type="taxonomic scope" value="Bacteria"/>
</dbReference>
<dbReference type="HOGENOM" id="CLU_087936_2_1_11"/>
<dbReference type="OrthoDB" id="5293449at2"/>
<dbReference type="Proteomes" id="UP000001190">
    <property type="component" value="Chromosome"/>
</dbReference>
<dbReference type="GO" id="GO:0005737">
    <property type="term" value="C:cytoplasm"/>
    <property type="evidence" value="ECO:0007669"/>
    <property type="project" value="UniProtKB-SubCell"/>
</dbReference>
<dbReference type="GO" id="GO:0009379">
    <property type="term" value="C:Holliday junction helicase complex"/>
    <property type="evidence" value="ECO:0007669"/>
    <property type="project" value="InterPro"/>
</dbReference>
<dbReference type="GO" id="GO:0048476">
    <property type="term" value="C:Holliday junction resolvase complex"/>
    <property type="evidence" value="ECO:0007669"/>
    <property type="project" value="UniProtKB-UniRule"/>
</dbReference>
<dbReference type="GO" id="GO:0005524">
    <property type="term" value="F:ATP binding"/>
    <property type="evidence" value="ECO:0007669"/>
    <property type="project" value="InterPro"/>
</dbReference>
<dbReference type="GO" id="GO:0000400">
    <property type="term" value="F:four-way junction DNA binding"/>
    <property type="evidence" value="ECO:0007669"/>
    <property type="project" value="UniProtKB-UniRule"/>
</dbReference>
<dbReference type="GO" id="GO:0009378">
    <property type="term" value="F:four-way junction helicase activity"/>
    <property type="evidence" value="ECO:0007669"/>
    <property type="project" value="InterPro"/>
</dbReference>
<dbReference type="GO" id="GO:0006310">
    <property type="term" value="P:DNA recombination"/>
    <property type="evidence" value="ECO:0007669"/>
    <property type="project" value="UniProtKB-UniRule"/>
</dbReference>
<dbReference type="GO" id="GO:0006281">
    <property type="term" value="P:DNA repair"/>
    <property type="evidence" value="ECO:0007669"/>
    <property type="project" value="UniProtKB-UniRule"/>
</dbReference>
<dbReference type="CDD" id="cd14332">
    <property type="entry name" value="UBA_RuvA_C"/>
    <property type="match status" value="1"/>
</dbReference>
<dbReference type="FunFam" id="2.40.50.140:FF:000083">
    <property type="entry name" value="Holliday junction ATP-dependent DNA helicase RuvA"/>
    <property type="match status" value="1"/>
</dbReference>
<dbReference type="Gene3D" id="1.10.150.20">
    <property type="entry name" value="5' to 3' exonuclease, C-terminal subdomain"/>
    <property type="match status" value="1"/>
</dbReference>
<dbReference type="Gene3D" id="1.10.8.10">
    <property type="entry name" value="DNA helicase RuvA subunit, C-terminal domain"/>
    <property type="match status" value="1"/>
</dbReference>
<dbReference type="Gene3D" id="2.40.50.140">
    <property type="entry name" value="Nucleic acid-binding proteins"/>
    <property type="match status" value="1"/>
</dbReference>
<dbReference type="HAMAP" id="MF_00031">
    <property type="entry name" value="DNA_HJ_migration_RuvA"/>
    <property type="match status" value="1"/>
</dbReference>
<dbReference type="InterPro" id="IPR013849">
    <property type="entry name" value="DNA_helicase_Holl-junc_RuvA_I"/>
</dbReference>
<dbReference type="InterPro" id="IPR012340">
    <property type="entry name" value="NA-bd_OB-fold"/>
</dbReference>
<dbReference type="InterPro" id="IPR000085">
    <property type="entry name" value="RuvA"/>
</dbReference>
<dbReference type="InterPro" id="IPR010994">
    <property type="entry name" value="RuvA_2-like"/>
</dbReference>
<dbReference type="InterPro" id="IPR011114">
    <property type="entry name" value="RuvA_C"/>
</dbReference>
<dbReference type="InterPro" id="IPR036267">
    <property type="entry name" value="RuvA_C_sf"/>
</dbReference>
<dbReference type="NCBIfam" id="TIGR00084">
    <property type="entry name" value="ruvA"/>
    <property type="match status" value="1"/>
</dbReference>
<dbReference type="Pfam" id="PF14520">
    <property type="entry name" value="HHH_5"/>
    <property type="match status" value="1"/>
</dbReference>
<dbReference type="Pfam" id="PF07499">
    <property type="entry name" value="RuvA_C"/>
    <property type="match status" value="1"/>
</dbReference>
<dbReference type="Pfam" id="PF01330">
    <property type="entry name" value="RuvA_N"/>
    <property type="match status" value="1"/>
</dbReference>
<dbReference type="SUPFAM" id="SSF46929">
    <property type="entry name" value="DNA helicase RuvA subunit, C-terminal domain"/>
    <property type="match status" value="1"/>
</dbReference>
<dbReference type="SUPFAM" id="SSF50249">
    <property type="entry name" value="Nucleic acid-binding proteins"/>
    <property type="match status" value="1"/>
</dbReference>
<dbReference type="SUPFAM" id="SSF47781">
    <property type="entry name" value="RuvA domain 2-like"/>
    <property type="match status" value="1"/>
</dbReference>
<reference key="1">
    <citation type="journal article" date="2008" name="Genome Res.">
        <title>Insights from the complete genome sequence of Mycobacterium marinum on the evolution of Mycobacterium tuberculosis.</title>
        <authorList>
            <person name="Stinear T.P."/>
            <person name="Seemann T."/>
            <person name="Harrison P.F."/>
            <person name="Jenkin G.A."/>
            <person name="Davies J.K."/>
            <person name="Johnson P.D."/>
            <person name="Abdellah Z."/>
            <person name="Arrowsmith C."/>
            <person name="Chillingworth T."/>
            <person name="Churcher C."/>
            <person name="Clarke K."/>
            <person name="Cronin A."/>
            <person name="Davis P."/>
            <person name="Goodhead I."/>
            <person name="Holroyd N."/>
            <person name="Jagels K."/>
            <person name="Lord A."/>
            <person name="Moule S."/>
            <person name="Mungall K."/>
            <person name="Norbertczak H."/>
            <person name="Quail M.A."/>
            <person name="Rabbinowitsch E."/>
            <person name="Walker D."/>
            <person name="White B."/>
            <person name="Whitehead S."/>
            <person name="Small P.L."/>
            <person name="Brosch R."/>
            <person name="Ramakrishnan L."/>
            <person name="Fischbach M.A."/>
            <person name="Parkhill J."/>
            <person name="Cole S.T."/>
        </authorList>
    </citation>
    <scope>NUCLEOTIDE SEQUENCE [LARGE SCALE GENOMIC DNA]</scope>
    <source>
        <strain>ATCC BAA-535 / M</strain>
    </source>
</reference>
<evidence type="ECO:0000255" key="1">
    <source>
        <dbReference type="HAMAP-Rule" id="MF_00031"/>
    </source>
</evidence>
<accession>B2HN62</accession>